<protein>
    <recommendedName>
        <fullName evidence="1">Diaminopimelate epimerase</fullName>
        <shortName evidence="1">DAP epimerase</shortName>
        <ecNumber evidence="1">5.1.1.7</ecNumber>
    </recommendedName>
    <alternativeName>
        <fullName evidence="1">PLP-independent amino acid racemase</fullName>
    </alternativeName>
</protein>
<proteinExistence type="inferred from homology"/>
<evidence type="ECO:0000255" key="1">
    <source>
        <dbReference type="HAMAP-Rule" id="MF_00197"/>
    </source>
</evidence>
<sequence length="249" mass="28356">MKFYKYCASGNDFVITNADRKEDRSSLAKELCNRYEGIGADGFIVILPHEKYDFEWEFYNNDGSRAAMCGNGSRAAAHFAHHINKINPSMIFLTGAGVIKAKVNQDKVEVSLGKIKSVQNTFEKLGKTWQLCDTGVPHLVHFCQSLDEFDTMLCQKMRQKYNANVNFVKILDENHLKVRTYERGVEDETLACGTGMGACFYLAFLNKKVQNKVKITPKSGEEMGFAYKNEELFFEGKVKYCFEANYNFS</sequence>
<gene>
    <name evidence="1" type="primary">dapF</name>
    <name type="ordered locus">JJD26997_1883</name>
</gene>
<name>DAPF_CAMJD</name>
<reference key="1">
    <citation type="submission" date="2007-07" db="EMBL/GenBank/DDBJ databases">
        <title>Complete genome sequence of Campylobacter jejuni subsp doylei 269.97 isolated from human blood.</title>
        <authorList>
            <person name="Fouts D.E."/>
            <person name="Mongodin E.F."/>
            <person name="Puiu D."/>
            <person name="Sebastian Y."/>
            <person name="Miller W.G."/>
            <person name="Mandrell R.E."/>
            <person name="Lastovica A.J."/>
            <person name="Nelson K.E."/>
        </authorList>
    </citation>
    <scope>NUCLEOTIDE SEQUENCE [LARGE SCALE GENOMIC DNA]</scope>
    <source>
        <strain>ATCC BAA-1458 / RM4099 / 269.97</strain>
    </source>
</reference>
<dbReference type="EC" id="5.1.1.7" evidence="1"/>
<dbReference type="EMBL" id="CP000768">
    <property type="protein sequence ID" value="ABS43840.1"/>
    <property type="molecule type" value="Genomic_DNA"/>
</dbReference>
<dbReference type="SMR" id="A7H5P5"/>
<dbReference type="KEGG" id="cjd:JJD26997_1883"/>
<dbReference type="HOGENOM" id="CLU_053306_3_2_7"/>
<dbReference type="UniPathway" id="UPA00034">
    <property type="reaction ID" value="UER00025"/>
</dbReference>
<dbReference type="Proteomes" id="UP000002302">
    <property type="component" value="Chromosome"/>
</dbReference>
<dbReference type="GO" id="GO:0005829">
    <property type="term" value="C:cytosol"/>
    <property type="evidence" value="ECO:0007669"/>
    <property type="project" value="TreeGrafter"/>
</dbReference>
<dbReference type="GO" id="GO:0008837">
    <property type="term" value="F:diaminopimelate epimerase activity"/>
    <property type="evidence" value="ECO:0007669"/>
    <property type="project" value="UniProtKB-UniRule"/>
</dbReference>
<dbReference type="GO" id="GO:0009089">
    <property type="term" value="P:lysine biosynthetic process via diaminopimelate"/>
    <property type="evidence" value="ECO:0007669"/>
    <property type="project" value="UniProtKB-UniRule"/>
</dbReference>
<dbReference type="Gene3D" id="3.10.310.10">
    <property type="entry name" value="Diaminopimelate Epimerase, Chain A, domain 1"/>
    <property type="match status" value="2"/>
</dbReference>
<dbReference type="HAMAP" id="MF_00197">
    <property type="entry name" value="DAP_epimerase"/>
    <property type="match status" value="1"/>
</dbReference>
<dbReference type="InterPro" id="IPR018510">
    <property type="entry name" value="DAP_epimerase_AS"/>
</dbReference>
<dbReference type="InterPro" id="IPR001653">
    <property type="entry name" value="DAP_epimerase_DapF"/>
</dbReference>
<dbReference type="NCBIfam" id="TIGR00652">
    <property type="entry name" value="DapF"/>
    <property type="match status" value="1"/>
</dbReference>
<dbReference type="PANTHER" id="PTHR31689:SF0">
    <property type="entry name" value="DIAMINOPIMELATE EPIMERASE"/>
    <property type="match status" value="1"/>
</dbReference>
<dbReference type="PANTHER" id="PTHR31689">
    <property type="entry name" value="DIAMINOPIMELATE EPIMERASE, CHLOROPLASTIC"/>
    <property type="match status" value="1"/>
</dbReference>
<dbReference type="Pfam" id="PF01678">
    <property type="entry name" value="DAP_epimerase"/>
    <property type="match status" value="2"/>
</dbReference>
<dbReference type="SUPFAM" id="SSF54506">
    <property type="entry name" value="Diaminopimelate epimerase-like"/>
    <property type="match status" value="2"/>
</dbReference>
<dbReference type="PROSITE" id="PS01326">
    <property type="entry name" value="DAP_EPIMERASE"/>
    <property type="match status" value="1"/>
</dbReference>
<organism>
    <name type="scientific">Campylobacter jejuni subsp. doylei (strain ATCC BAA-1458 / RM4099 / 269.97)</name>
    <dbReference type="NCBI Taxonomy" id="360109"/>
    <lineage>
        <taxon>Bacteria</taxon>
        <taxon>Pseudomonadati</taxon>
        <taxon>Campylobacterota</taxon>
        <taxon>Epsilonproteobacteria</taxon>
        <taxon>Campylobacterales</taxon>
        <taxon>Campylobacteraceae</taxon>
        <taxon>Campylobacter</taxon>
    </lineage>
</organism>
<feature type="chain" id="PRO_1000011864" description="Diaminopimelate epimerase">
    <location>
        <begin position="1"/>
        <end position="249"/>
    </location>
</feature>
<feature type="active site" description="Proton donor" evidence="1">
    <location>
        <position position="69"/>
    </location>
</feature>
<feature type="active site" description="Proton acceptor" evidence="1">
    <location>
        <position position="192"/>
    </location>
</feature>
<feature type="binding site" evidence="1">
    <location>
        <position position="11"/>
    </location>
    <ligand>
        <name>substrate</name>
    </ligand>
</feature>
<feature type="binding site" evidence="1">
    <location>
        <position position="60"/>
    </location>
    <ligand>
        <name>substrate</name>
    </ligand>
</feature>
<feature type="binding site" evidence="1">
    <location>
        <begin position="70"/>
        <end position="71"/>
    </location>
    <ligand>
        <name>substrate</name>
    </ligand>
</feature>
<feature type="binding site" evidence="1">
    <location>
        <position position="164"/>
    </location>
    <ligand>
        <name>substrate</name>
    </ligand>
</feature>
<feature type="binding site" evidence="1">
    <location>
        <begin position="182"/>
        <end position="183"/>
    </location>
    <ligand>
        <name>substrate</name>
    </ligand>
</feature>
<feature type="binding site" evidence="1">
    <location>
        <begin position="193"/>
        <end position="194"/>
    </location>
    <ligand>
        <name>substrate</name>
    </ligand>
</feature>
<feature type="site" description="Could be important to modulate the pK values of the two catalytic cysteine residues" evidence="1">
    <location>
        <position position="138"/>
    </location>
</feature>
<feature type="site" description="Could be important to modulate the pK values of the two catalytic cysteine residues" evidence="1">
    <location>
        <position position="182"/>
    </location>
</feature>
<accession>A7H5P5</accession>
<keyword id="KW-0028">Amino-acid biosynthesis</keyword>
<keyword id="KW-0963">Cytoplasm</keyword>
<keyword id="KW-0413">Isomerase</keyword>
<keyword id="KW-0457">Lysine biosynthesis</keyword>
<comment type="function">
    <text evidence="1">Catalyzes the stereoinversion of LL-2,6-diaminopimelate (L,L-DAP) to meso-diaminopimelate (meso-DAP), a precursor of L-lysine and an essential component of the bacterial peptidoglycan.</text>
</comment>
<comment type="catalytic activity">
    <reaction evidence="1">
        <text>(2S,6S)-2,6-diaminopimelate = meso-2,6-diaminopimelate</text>
        <dbReference type="Rhea" id="RHEA:15393"/>
        <dbReference type="ChEBI" id="CHEBI:57609"/>
        <dbReference type="ChEBI" id="CHEBI:57791"/>
        <dbReference type="EC" id="5.1.1.7"/>
    </reaction>
</comment>
<comment type="pathway">
    <text evidence="1">Amino-acid biosynthesis; L-lysine biosynthesis via DAP pathway; DL-2,6-diaminopimelate from LL-2,6-diaminopimelate: step 1/1.</text>
</comment>
<comment type="subunit">
    <text evidence="1">Homodimer.</text>
</comment>
<comment type="subcellular location">
    <subcellularLocation>
        <location evidence="1">Cytoplasm</location>
    </subcellularLocation>
</comment>
<comment type="similarity">
    <text evidence="1">Belongs to the diaminopimelate epimerase family.</text>
</comment>